<comment type="subcellular location">
    <subcellularLocation>
        <location evidence="2">Cell inner membrane</location>
        <topology evidence="1">Lipid-anchor</topology>
    </subcellularLocation>
</comment>
<comment type="similarity">
    <text evidence="2">To B.suis ORF12 in VirB region.</text>
</comment>
<protein>
    <recommendedName>
        <fullName>Putative conjugal transfer lipoprotein XF_a0011.1</fullName>
    </recommendedName>
</protein>
<reference key="1">
    <citation type="journal article" date="2000" name="Nature">
        <title>The genome sequence of the plant pathogen Xylella fastidiosa.</title>
        <authorList>
            <person name="Simpson A.J.G."/>
            <person name="Reinach F.C."/>
            <person name="Arruda P."/>
            <person name="Abreu F.A."/>
            <person name="Acencio M."/>
            <person name="Alvarenga R."/>
            <person name="Alves L.M.C."/>
            <person name="Araya J.E."/>
            <person name="Baia G.S."/>
            <person name="Baptista C.S."/>
            <person name="Barros M.H."/>
            <person name="Bonaccorsi E.D."/>
            <person name="Bordin S."/>
            <person name="Bove J.M."/>
            <person name="Briones M.R.S."/>
            <person name="Bueno M.R.P."/>
            <person name="Camargo A.A."/>
            <person name="Camargo L.E.A."/>
            <person name="Carraro D.M."/>
            <person name="Carrer H."/>
            <person name="Colauto N.B."/>
            <person name="Colombo C."/>
            <person name="Costa F.F."/>
            <person name="Costa M.C.R."/>
            <person name="Costa-Neto C.M."/>
            <person name="Coutinho L.L."/>
            <person name="Cristofani M."/>
            <person name="Dias-Neto E."/>
            <person name="Docena C."/>
            <person name="El-Dorry H."/>
            <person name="Facincani A.P."/>
            <person name="Ferreira A.J.S."/>
            <person name="Ferreira V.C.A."/>
            <person name="Ferro J.A."/>
            <person name="Fraga J.S."/>
            <person name="Franca S.C."/>
            <person name="Franco M.C."/>
            <person name="Frohme M."/>
            <person name="Furlan L.R."/>
            <person name="Garnier M."/>
            <person name="Goldman G.H."/>
            <person name="Goldman M.H.S."/>
            <person name="Gomes S.L."/>
            <person name="Gruber A."/>
            <person name="Ho P.L."/>
            <person name="Hoheisel J.D."/>
            <person name="Junqueira M.L."/>
            <person name="Kemper E.L."/>
            <person name="Kitajima J.P."/>
            <person name="Krieger J.E."/>
            <person name="Kuramae E.E."/>
            <person name="Laigret F."/>
            <person name="Lambais M.R."/>
            <person name="Leite L.C.C."/>
            <person name="Lemos E.G.M."/>
            <person name="Lemos M.V.F."/>
            <person name="Lopes S.A."/>
            <person name="Lopes C.R."/>
            <person name="Machado J.A."/>
            <person name="Machado M.A."/>
            <person name="Madeira A.M.B.N."/>
            <person name="Madeira H.M.F."/>
            <person name="Marino C.L."/>
            <person name="Marques M.V."/>
            <person name="Martins E.A.L."/>
            <person name="Martins E.M.F."/>
            <person name="Matsukuma A.Y."/>
            <person name="Menck C.F.M."/>
            <person name="Miracca E.C."/>
            <person name="Miyaki C.Y."/>
            <person name="Monteiro-Vitorello C.B."/>
            <person name="Moon D.H."/>
            <person name="Nagai M.A."/>
            <person name="Nascimento A.L.T.O."/>
            <person name="Netto L.E.S."/>
            <person name="Nhani A. Jr."/>
            <person name="Nobrega F.G."/>
            <person name="Nunes L.R."/>
            <person name="Oliveira M.A."/>
            <person name="de Oliveira M.C."/>
            <person name="de Oliveira R.C."/>
            <person name="Palmieri D.A."/>
            <person name="Paris A."/>
            <person name="Peixoto B.R."/>
            <person name="Pereira G.A.G."/>
            <person name="Pereira H.A. Jr."/>
            <person name="Pesquero J.B."/>
            <person name="Quaggio R.B."/>
            <person name="Roberto P.G."/>
            <person name="Rodrigues V."/>
            <person name="de Rosa A.J.M."/>
            <person name="de Rosa V.E. Jr."/>
            <person name="de Sa R.G."/>
            <person name="Santelli R.V."/>
            <person name="Sawasaki H.E."/>
            <person name="da Silva A.C.R."/>
            <person name="da Silva A.M."/>
            <person name="da Silva F.R."/>
            <person name="Silva W.A. Jr."/>
            <person name="da Silveira J.F."/>
            <person name="Silvestri M.L.Z."/>
            <person name="Siqueira W.J."/>
            <person name="de Souza A.A."/>
            <person name="de Souza A.P."/>
            <person name="Terenzi M.F."/>
            <person name="Truffi D."/>
            <person name="Tsai S.M."/>
            <person name="Tsuhako M.H."/>
            <person name="Vallada H."/>
            <person name="Van Sluys M.A."/>
            <person name="Verjovski-Almeida S."/>
            <person name="Vettore A.L."/>
            <person name="Zago M.A."/>
            <person name="Zatz M."/>
            <person name="Meidanis J."/>
            <person name="Setubal J.C."/>
        </authorList>
    </citation>
    <scope>NUCLEOTIDE SEQUENCE [LARGE SCALE GENOMIC DNA]</scope>
    <source>
        <strain>9a5c</strain>
    </source>
</reference>
<reference key="2">
    <citation type="journal article" date="2001" name="Plasmid">
        <title>Genetic organization of Plasmid pXF51 from the plant pathogen Xylella fastidiosa.</title>
        <authorList>
            <person name="Marques M.V."/>
            <person name="da Silva A.M."/>
            <person name="Gomes S.L."/>
        </authorList>
    </citation>
    <scope>IDENTIFICATION</scope>
</reference>
<evidence type="ECO:0000255" key="1">
    <source>
        <dbReference type="PROSITE-ProRule" id="PRU00303"/>
    </source>
</evidence>
<evidence type="ECO:0000305" key="2"/>
<keyword id="KW-0997">Cell inner membrane</keyword>
<keyword id="KW-1003">Cell membrane</keyword>
<keyword id="KW-0449">Lipoprotein</keyword>
<keyword id="KW-0472">Membrane</keyword>
<keyword id="KW-0564">Palmitate</keyword>
<keyword id="KW-0614">Plasmid</keyword>
<keyword id="KW-0732">Signal</keyword>
<geneLocation type="plasmid">
    <name>pXF51</name>
</geneLocation>
<feature type="signal peptide" evidence="1">
    <location>
        <begin position="1"/>
        <end position="15"/>
    </location>
</feature>
<feature type="chain" id="PRO_0000014307" description="Putative conjugal transfer lipoprotein XF_a0011.1">
    <location>
        <begin position="16"/>
        <end position="63"/>
    </location>
</feature>
<feature type="lipid moiety-binding region" description="N-palmitoyl cysteine" evidence="1">
    <location>
        <position position="16"/>
    </location>
</feature>
<feature type="lipid moiety-binding region" description="S-diacylglycerol cysteine" evidence="1">
    <location>
        <position position="16"/>
    </location>
</feature>
<proteinExistence type="inferred from homology"/>
<organism>
    <name type="scientific">Xylella fastidiosa (strain 9a5c)</name>
    <dbReference type="NCBI Taxonomy" id="160492"/>
    <lineage>
        <taxon>Bacteria</taxon>
        <taxon>Pseudomonadati</taxon>
        <taxon>Pseudomonadota</taxon>
        <taxon>Gammaproteobacteria</taxon>
        <taxon>Lysobacterales</taxon>
        <taxon>Lysobacteraceae</taxon>
        <taxon>Xylella</taxon>
    </lineage>
</organism>
<name>YY1A_XYLFA</name>
<gene>
    <name type="ordered locus">XF_a0011.1</name>
    <name type="ordered locus">XF_a0065</name>
</gene>
<accession>P58337</accession>
<dbReference type="EMBL" id="AE003851">
    <property type="protein sequence ID" value="AAK97741.1"/>
    <property type="molecule type" value="Genomic_DNA"/>
</dbReference>
<dbReference type="KEGG" id="xfa:XF_a0065"/>
<dbReference type="HOGENOM" id="CLU_2884964_0_0_6"/>
<dbReference type="Proteomes" id="UP000000812">
    <property type="component" value="Plasmid pXF51"/>
</dbReference>
<dbReference type="GO" id="GO:0005886">
    <property type="term" value="C:plasma membrane"/>
    <property type="evidence" value="ECO:0007669"/>
    <property type="project" value="UniProtKB-SubCell"/>
</dbReference>
<dbReference type="PROSITE" id="PS51257">
    <property type="entry name" value="PROKAR_LIPOPROTEIN"/>
    <property type="match status" value="1"/>
</dbReference>
<sequence>MRYTFGIVTVYLLAGCAGSPPKPPEVKGKYRPINRVEAPASAGRNPVNSLNALCGNLNEKQCR</sequence>